<gene>
    <name evidence="1" type="primary">rsxC</name>
    <name type="ordered locus">SDY_1852</name>
</gene>
<feature type="chain" id="PRO_1000013613" description="Ion-translocating oxidoreductase complex subunit C">
    <location>
        <begin position="1"/>
        <end position="772"/>
    </location>
</feature>
<feature type="domain" description="4Fe-4S ferredoxin-type 1" evidence="1">
    <location>
        <begin position="369"/>
        <end position="397"/>
    </location>
</feature>
<feature type="domain" description="4Fe-4S ferredoxin-type 2" evidence="1">
    <location>
        <begin position="407"/>
        <end position="436"/>
    </location>
</feature>
<feature type="region of interest" description="Disordered" evidence="2">
    <location>
        <begin position="599"/>
        <end position="748"/>
    </location>
</feature>
<feature type="binding site" evidence="1">
    <location>
        <position position="377"/>
    </location>
    <ligand>
        <name>[4Fe-4S] cluster</name>
        <dbReference type="ChEBI" id="CHEBI:49883"/>
        <label>1</label>
    </ligand>
</feature>
<feature type="binding site" evidence="1">
    <location>
        <position position="380"/>
    </location>
    <ligand>
        <name>[4Fe-4S] cluster</name>
        <dbReference type="ChEBI" id="CHEBI:49883"/>
        <label>1</label>
    </ligand>
</feature>
<feature type="binding site" evidence="1">
    <location>
        <position position="383"/>
    </location>
    <ligand>
        <name>[4Fe-4S] cluster</name>
        <dbReference type="ChEBI" id="CHEBI:49883"/>
        <label>1</label>
    </ligand>
</feature>
<feature type="binding site" evidence="1">
    <location>
        <position position="387"/>
    </location>
    <ligand>
        <name>[4Fe-4S] cluster</name>
        <dbReference type="ChEBI" id="CHEBI:49883"/>
        <label>2</label>
    </ligand>
</feature>
<feature type="binding site" evidence="1">
    <location>
        <position position="416"/>
    </location>
    <ligand>
        <name>[4Fe-4S] cluster</name>
        <dbReference type="ChEBI" id="CHEBI:49883"/>
        <label>2</label>
    </ligand>
</feature>
<feature type="binding site" evidence="1">
    <location>
        <position position="419"/>
    </location>
    <ligand>
        <name>[4Fe-4S] cluster</name>
        <dbReference type="ChEBI" id="CHEBI:49883"/>
        <label>2</label>
    </ligand>
</feature>
<feature type="binding site" evidence="1">
    <location>
        <position position="422"/>
    </location>
    <ligand>
        <name>[4Fe-4S] cluster</name>
        <dbReference type="ChEBI" id="CHEBI:49883"/>
        <label>2</label>
    </ligand>
</feature>
<feature type="binding site" evidence="1">
    <location>
        <position position="426"/>
    </location>
    <ligand>
        <name>[4Fe-4S] cluster</name>
        <dbReference type="ChEBI" id="CHEBI:49883"/>
        <label>1</label>
    </ligand>
</feature>
<dbReference type="EC" id="7.-.-.-" evidence="1"/>
<dbReference type="EMBL" id="CP000034">
    <property type="protein sequence ID" value="ABB61961.1"/>
    <property type="molecule type" value="Genomic_DNA"/>
</dbReference>
<dbReference type="RefSeq" id="WP_000915691.1">
    <property type="nucleotide sequence ID" value="NC_007606.1"/>
</dbReference>
<dbReference type="RefSeq" id="YP_403452.1">
    <property type="nucleotide sequence ID" value="NC_007606.1"/>
</dbReference>
<dbReference type="SMR" id="Q32FE4"/>
<dbReference type="STRING" id="300267.SDY_1852"/>
<dbReference type="EnsemblBacteria" id="ABB61961">
    <property type="protein sequence ID" value="ABB61961"/>
    <property type="gene ID" value="SDY_1852"/>
</dbReference>
<dbReference type="KEGG" id="sdy:SDY_1852"/>
<dbReference type="PATRIC" id="fig|300267.13.peg.2231"/>
<dbReference type="HOGENOM" id="CLU_010808_2_1_6"/>
<dbReference type="Proteomes" id="UP000002716">
    <property type="component" value="Chromosome"/>
</dbReference>
<dbReference type="GO" id="GO:0005886">
    <property type="term" value="C:plasma membrane"/>
    <property type="evidence" value="ECO:0007669"/>
    <property type="project" value="UniProtKB-SubCell"/>
</dbReference>
<dbReference type="GO" id="GO:0051539">
    <property type="term" value="F:4 iron, 4 sulfur cluster binding"/>
    <property type="evidence" value="ECO:0007669"/>
    <property type="project" value="UniProtKB-KW"/>
</dbReference>
<dbReference type="GO" id="GO:0009055">
    <property type="term" value="F:electron transfer activity"/>
    <property type="evidence" value="ECO:0007669"/>
    <property type="project" value="InterPro"/>
</dbReference>
<dbReference type="GO" id="GO:0046872">
    <property type="term" value="F:metal ion binding"/>
    <property type="evidence" value="ECO:0007669"/>
    <property type="project" value="UniProtKB-KW"/>
</dbReference>
<dbReference type="GO" id="GO:0022900">
    <property type="term" value="P:electron transport chain"/>
    <property type="evidence" value="ECO:0007669"/>
    <property type="project" value="UniProtKB-UniRule"/>
</dbReference>
<dbReference type="Gene3D" id="3.30.70.20">
    <property type="match status" value="1"/>
</dbReference>
<dbReference type="Gene3D" id="3.40.50.11540">
    <property type="entry name" value="NADH-ubiquinone oxidoreductase 51kDa subunit"/>
    <property type="match status" value="1"/>
</dbReference>
<dbReference type="HAMAP" id="MF_00461">
    <property type="entry name" value="RsxC_RnfC"/>
    <property type="match status" value="1"/>
</dbReference>
<dbReference type="InterPro" id="IPR017896">
    <property type="entry name" value="4Fe4S_Fe-S-bd"/>
</dbReference>
<dbReference type="InterPro" id="IPR017900">
    <property type="entry name" value="4Fe4S_Fe_S_CS"/>
</dbReference>
<dbReference type="InterPro" id="IPR010208">
    <property type="entry name" value="Ion_transpt_RnfC/RsxC"/>
</dbReference>
<dbReference type="InterPro" id="IPR011538">
    <property type="entry name" value="Nuo51_FMN-bd"/>
</dbReference>
<dbReference type="InterPro" id="IPR037225">
    <property type="entry name" value="Nuo51_FMN-bd_sf"/>
</dbReference>
<dbReference type="InterPro" id="IPR026902">
    <property type="entry name" value="RnfC_N"/>
</dbReference>
<dbReference type="InterPro" id="IPR019554">
    <property type="entry name" value="Soluble_ligand-bd"/>
</dbReference>
<dbReference type="NCBIfam" id="NF003454">
    <property type="entry name" value="PRK05035.1"/>
    <property type="match status" value="1"/>
</dbReference>
<dbReference type="NCBIfam" id="TIGR01945">
    <property type="entry name" value="rnfC"/>
    <property type="match status" value="1"/>
</dbReference>
<dbReference type="PANTHER" id="PTHR43034">
    <property type="entry name" value="ION-TRANSLOCATING OXIDOREDUCTASE COMPLEX SUBUNIT C"/>
    <property type="match status" value="1"/>
</dbReference>
<dbReference type="PANTHER" id="PTHR43034:SF2">
    <property type="entry name" value="ION-TRANSLOCATING OXIDOREDUCTASE COMPLEX SUBUNIT C"/>
    <property type="match status" value="1"/>
</dbReference>
<dbReference type="Pfam" id="PF01512">
    <property type="entry name" value="Complex1_51K"/>
    <property type="match status" value="1"/>
</dbReference>
<dbReference type="Pfam" id="PF12838">
    <property type="entry name" value="Fer4_7"/>
    <property type="match status" value="1"/>
</dbReference>
<dbReference type="Pfam" id="PF13375">
    <property type="entry name" value="RnfC_N"/>
    <property type="match status" value="1"/>
</dbReference>
<dbReference type="Pfam" id="PF10531">
    <property type="entry name" value="SLBB"/>
    <property type="match status" value="1"/>
</dbReference>
<dbReference type="SUPFAM" id="SSF46548">
    <property type="entry name" value="alpha-helical ferredoxin"/>
    <property type="match status" value="1"/>
</dbReference>
<dbReference type="SUPFAM" id="SSF142019">
    <property type="entry name" value="Nqo1 FMN-binding domain-like"/>
    <property type="match status" value="1"/>
</dbReference>
<dbReference type="PROSITE" id="PS00198">
    <property type="entry name" value="4FE4S_FER_1"/>
    <property type="match status" value="2"/>
</dbReference>
<dbReference type="PROSITE" id="PS51379">
    <property type="entry name" value="4FE4S_FER_2"/>
    <property type="match status" value="2"/>
</dbReference>
<evidence type="ECO:0000255" key="1">
    <source>
        <dbReference type="HAMAP-Rule" id="MF_00461"/>
    </source>
</evidence>
<evidence type="ECO:0000256" key="2">
    <source>
        <dbReference type="SAM" id="MobiDB-lite"/>
    </source>
</evidence>
<sequence>MLKLFSAFRKNKIWDFNGGIHPPEMKTQSNGTPLRQVPLAQRFVIPLKQHIGAEGELCVSVGDKVLRGQPLTRGRGKMLPVHAPTSGTVTAIAPHSTAHPSALAELSVIIDADGEDCWIPRDGWADYRSRRREELIERIHQFGVAGLGGAGFPTGVKLQGGGDKIETLIINAAECEPYITADDRLMQDCAAQVVEGIRILAHILQPREILIGIEDNKPQAISMLRAVLADSHDISLRVIPTKYPSGGAKQLTYILTGKQVPHGGRSSDIGVLMQNVGTAYAVKRAVIDGEPITERVVTLTGEAIARPGNVWARLGTPVRHLLNDAGFCPSADQMVIMGGPLMGLTLPWLDVPVVKITNCLLAPSANELGEPQEEQSCIRCSACADACPADLLPQQLYWFSKGQQHDKATTHNIADCIECGACAWVCPSNIPLVQYFRQEKAEIAAIRQEEKRAAEAKARFEARQARLEREKAARLERHKSAAVQPAAKDKDAIAAALARVKEKQAQATQPIVIKAGERPDNSAIIAAREARKAQARAKQAELQQTNDAATVTDPRKTAVEAAIARAKARKLEQQQANAEPEEQVDPRKAAVEAAIARAKARKLEQQQANAEPEEQVDPRKATVEAAIARAKARKLEQQQANAEPEEPVDPRKAAVEAAIARAKARKLEQQQANAEPEEPVDPRKAAVEAAIARAKARKLEQQQANAEPEEQVDPRKAAVEAAIARAKARKLEQQQANAEPEEQVDPRKAAVAAAIARVQAKKAAQQKVVNED</sequence>
<accession>Q32FE4</accession>
<protein>
    <recommendedName>
        <fullName evidence="1">Ion-translocating oxidoreductase complex subunit C</fullName>
        <ecNumber evidence="1">7.-.-.-</ecNumber>
    </recommendedName>
    <alternativeName>
        <fullName evidence="1">Rsx electron transport complex subunit C</fullName>
    </alternativeName>
</protein>
<organism>
    <name type="scientific">Shigella dysenteriae serotype 1 (strain Sd197)</name>
    <dbReference type="NCBI Taxonomy" id="300267"/>
    <lineage>
        <taxon>Bacteria</taxon>
        <taxon>Pseudomonadati</taxon>
        <taxon>Pseudomonadota</taxon>
        <taxon>Gammaproteobacteria</taxon>
        <taxon>Enterobacterales</taxon>
        <taxon>Enterobacteriaceae</taxon>
        <taxon>Shigella</taxon>
    </lineage>
</organism>
<keyword id="KW-0004">4Fe-4S</keyword>
<keyword id="KW-0997">Cell inner membrane</keyword>
<keyword id="KW-1003">Cell membrane</keyword>
<keyword id="KW-0249">Electron transport</keyword>
<keyword id="KW-0408">Iron</keyword>
<keyword id="KW-0411">Iron-sulfur</keyword>
<keyword id="KW-0472">Membrane</keyword>
<keyword id="KW-0479">Metal-binding</keyword>
<keyword id="KW-1185">Reference proteome</keyword>
<keyword id="KW-0677">Repeat</keyword>
<keyword id="KW-1278">Translocase</keyword>
<keyword id="KW-0813">Transport</keyword>
<comment type="function">
    <text evidence="1">Part of a membrane-bound complex that couples electron transfer with translocation of ions across the membrane. Required to maintain the reduced state of SoxR.</text>
</comment>
<comment type="cofactor">
    <cofactor evidence="1">
        <name>[4Fe-4S] cluster</name>
        <dbReference type="ChEBI" id="CHEBI:49883"/>
    </cofactor>
    <text evidence="1">Binds 2 [4Fe-4S] clusters per subunit.</text>
</comment>
<comment type="subunit">
    <text evidence="1">The complex is composed of six subunits: RsxA, RsxB, RsxC, RsxD, RsxE and RsxG.</text>
</comment>
<comment type="subcellular location">
    <subcellularLocation>
        <location evidence="1">Cell inner membrane</location>
        <topology evidence="1">Peripheral membrane protein</topology>
    </subcellularLocation>
</comment>
<comment type="similarity">
    <text evidence="1">Belongs to the 4Fe4S bacterial-type ferredoxin family. RnfC subfamily.</text>
</comment>
<reference key="1">
    <citation type="journal article" date="2005" name="Nucleic Acids Res.">
        <title>Genome dynamics and diversity of Shigella species, the etiologic agents of bacillary dysentery.</title>
        <authorList>
            <person name="Yang F."/>
            <person name="Yang J."/>
            <person name="Zhang X."/>
            <person name="Chen L."/>
            <person name="Jiang Y."/>
            <person name="Yan Y."/>
            <person name="Tang X."/>
            <person name="Wang J."/>
            <person name="Xiong Z."/>
            <person name="Dong J."/>
            <person name="Xue Y."/>
            <person name="Zhu Y."/>
            <person name="Xu X."/>
            <person name="Sun L."/>
            <person name="Chen S."/>
            <person name="Nie H."/>
            <person name="Peng J."/>
            <person name="Xu J."/>
            <person name="Wang Y."/>
            <person name="Yuan Z."/>
            <person name="Wen Y."/>
            <person name="Yao Z."/>
            <person name="Shen Y."/>
            <person name="Qiang B."/>
            <person name="Hou Y."/>
            <person name="Yu J."/>
            <person name="Jin Q."/>
        </authorList>
    </citation>
    <scope>NUCLEOTIDE SEQUENCE [LARGE SCALE GENOMIC DNA]</scope>
    <source>
        <strain>Sd197</strain>
    </source>
</reference>
<proteinExistence type="inferred from homology"/>
<name>RSXC_SHIDS</name>